<feature type="chain" id="PRO_1000080194" description="Putative membrane protein insertion efficiency factor">
    <location>
        <begin position="1"/>
        <end position="82"/>
    </location>
</feature>
<protein>
    <recommendedName>
        <fullName evidence="1">Putative membrane protein insertion efficiency factor</fullName>
    </recommendedName>
</protein>
<reference key="1">
    <citation type="journal article" date="2008" name="Infect. Immun.">
        <title>Genomic comparison of virulent Rickettsia rickettsii Sheila Smith and avirulent Rickettsia rickettsii Iowa.</title>
        <authorList>
            <person name="Ellison D.W."/>
            <person name="Clark T.R."/>
            <person name="Sturdevant D.E."/>
            <person name="Virtaneva K."/>
            <person name="Porcella S.F."/>
            <person name="Hackstadt T."/>
        </authorList>
    </citation>
    <scope>NUCLEOTIDE SEQUENCE [LARGE SCALE GENOMIC DNA]</scope>
    <source>
        <strain>Iowa</strain>
    </source>
</reference>
<organism>
    <name type="scientific">Rickettsia rickettsii (strain Iowa)</name>
    <dbReference type="NCBI Taxonomy" id="452659"/>
    <lineage>
        <taxon>Bacteria</taxon>
        <taxon>Pseudomonadati</taxon>
        <taxon>Pseudomonadota</taxon>
        <taxon>Alphaproteobacteria</taxon>
        <taxon>Rickettsiales</taxon>
        <taxon>Rickettsiaceae</taxon>
        <taxon>Rickettsieae</taxon>
        <taxon>Rickettsia</taxon>
        <taxon>spotted fever group</taxon>
    </lineage>
</organism>
<proteinExistence type="inferred from homology"/>
<evidence type="ECO:0000255" key="1">
    <source>
        <dbReference type="HAMAP-Rule" id="MF_00386"/>
    </source>
</evidence>
<gene>
    <name type="ordered locus">RrIowa_0574</name>
</gene>
<name>YIDD_RICRO</name>
<sequence length="82" mass="9516">MTRILLLLLRFYQYFISPLLGNNCRFHPTCSEYAKEAISMHGSIKGLWFTFKRIIKCQPFCDGGYDTVPISIKNSKPLNKKI</sequence>
<keyword id="KW-0997">Cell inner membrane</keyword>
<keyword id="KW-1003">Cell membrane</keyword>
<keyword id="KW-0472">Membrane</keyword>
<dbReference type="EMBL" id="CP000766">
    <property type="protein sequence ID" value="ABY72445.1"/>
    <property type="molecule type" value="Genomic_DNA"/>
</dbReference>
<dbReference type="KEGG" id="rrj:RrIowa_0574"/>
<dbReference type="eggNOG" id="COG0759">
    <property type="taxonomic scope" value="Bacteria"/>
</dbReference>
<dbReference type="HOGENOM" id="CLU_144811_5_2_5"/>
<dbReference type="Proteomes" id="UP000000796">
    <property type="component" value="Chromosome"/>
</dbReference>
<dbReference type="GO" id="GO:0005886">
    <property type="term" value="C:plasma membrane"/>
    <property type="evidence" value="ECO:0007669"/>
    <property type="project" value="UniProtKB-SubCell"/>
</dbReference>
<dbReference type="HAMAP" id="MF_00386">
    <property type="entry name" value="UPF0161_YidD"/>
    <property type="match status" value="1"/>
</dbReference>
<dbReference type="InterPro" id="IPR002696">
    <property type="entry name" value="Membr_insert_effic_factor_YidD"/>
</dbReference>
<dbReference type="NCBIfam" id="TIGR00278">
    <property type="entry name" value="membrane protein insertion efficiency factor YidD"/>
    <property type="match status" value="1"/>
</dbReference>
<dbReference type="PANTHER" id="PTHR33383">
    <property type="entry name" value="MEMBRANE PROTEIN INSERTION EFFICIENCY FACTOR-RELATED"/>
    <property type="match status" value="1"/>
</dbReference>
<dbReference type="PANTHER" id="PTHR33383:SF1">
    <property type="entry name" value="MEMBRANE PROTEIN INSERTION EFFICIENCY FACTOR-RELATED"/>
    <property type="match status" value="1"/>
</dbReference>
<dbReference type="Pfam" id="PF01809">
    <property type="entry name" value="YidD"/>
    <property type="match status" value="1"/>
</dbReference>
<dbReference type="SMART" id="SM01234">
    <property type="entry name" value="Haemolytic"/>
    <property type="match status" value="1"/>
</dbReference>
<accession>B0BX69</accession>
<comment type="function">
    <text evidence="1">Could be involved in insertion of integral membrane proteins into the membrane.</text>
</comment>
<comment type="subcellular location">
    <subcellularLocation>
        <location evidence="1">Cell inner membrane</location>
        <topology evidence="1">Peripheral membrane protein</topology>
        <orientation evidence="1">Cytoplasmic side</orientation>
    </subcellularLocation>
</comment>
<comment type="similarity">
    <text evidence="1">Belongs to the UPF0161 family.</text>
</comment>